<sequence>MDINMTLVGQLIAFVVFVIFCMKYVWPPIIGAIEDRQATIADGLAASDRAAKDLELAQEKATAQLKEAKVQAASIVDAAKKHEAKIVDEAAGKAQVEKERILASGHAEIETERNRAKEELRKEVAVLAIAGAEKILERSIDAAAHSDILDKLVAEL</sequence>
<reference key="1">
    <citation type="journal article" date="2005" name="Proc. Natl. Acad. Sci. U.S.A.">
        <title>The psychrophilic lifestyle as revealed by the genome sequence of Colwellia psychrerythraea 34H through genomic and proteomic analyses.</title>
        <authorList>
            <person name="Methe B.A."/>
            <person name="Nelson K.E."/>
            <person name="Deming J.W."/>
            <person name="Momen B."/>
            <person name="Melamud E."/>
            <person name="Zhang X."/>
            <person name="Moult J."/>
            <person name="Madupu R."/>
            <person name="Nelson W.C."/>
            <person name="Dodson R.J."/>
            <person name="Brinkac L.M."/>
            <person name="Daugherty S.C."/>
            <person name="Durkin A.S."/>
            <person name="DeBoy R.T."/>
            <person name="Kolonay J.F."/>
            <person name="Sullivan S.A."/>
            <person name="Zhou L."/>
            <person name="Davidsen T.M."/>
            <person name="Wu M."/>
            <person name="Huston A.L."/>
            <person name="Lewis M."/>
            <person name="Weaver B."/>
            <person name="Weidman J.F."/>
            <person name="Khouri H."/>
            <person name="Utterback T.R."/>
            <person name="Feldblyum T.V."/>
            <person name="Fraser C.M."/>
        </authorList>
    </citation>
    <scope>NUCLEOTIDE SEQUENCE [LARGE SCALE GENOMIC DNA]</scope>
    <source>
        <strain>34H / ATCC BAA-681</strain>
    </source>
</reference>
<proteinExistence type="inferred from homology"/>
<protein>
    <recommendedName>
        <fullName evidence="1">ATP synthase subunit b</fullName>
    </recommendedName>
    <alternativeName>
        <fullName evidence="1">ATP synthase F(0) sector subunit b</fullName>
    </alternativeName>
    <alternativeName>
        <fullName evidence="1">ATPase subunit I</fullName>
    </alternativeName>
    <alternativeName>
        <fullName evidence="1">F-type ATPase subunit b</fullName>
        <shortName evidence="1">F-ATPase subunit b</shortName>
    </alternativeName>
</protein>
<name>ATPF_COLP3</name>
<organism>
    <name type="scientific">Colwellia psychrerythraea (strain 34H / ATCC BAA-681)</name>
    <name type="common">Vibrio psychroerythus</name>
    <dbReference type="NCBI Taxonomy" id="167879"/>
    <lineage>
        <taxon>Bacteria</taxon>
        <taxon>Pseudomonadati</taxon>
        <taxon>Pseudomonadota</taxon>
        <taxon>Gammaproteobacteria</taxon>
        <taxon>Alteromonadales</taxon>
        <taxon>Colwelliaceae</taxon>
        <taxon>Colwellia</taxon>
    </lineage>
</organism>
<gene>
    <name evidence="1" type="primary">atpF</name>
    <name type="ordered locus">CPS_0058</name>
</gene>
<accession>Q48AW4</accession>
<keyword id="KW-0066">ATP synthesis</keyword>
<keyword id="KW-0997">Cell inner membrane</keyword>
<keyword id="KW-1003">Cell membrane</keyword>
<keyword id="KW-0138">CF(0)</keyword>
<keyword id="KW-0375">Hydrogen ion transport</keyword>
<keyword id="KW-0406">Ion transport</keyword>
<keyword id="KW-0472">Membrane</keyword>
<keyword id="KW-0812">Transmembrane</keyword>
<keyword id="KW-1133">Transmembrane helix</keyword>
<keyword id="KW-0813">Transport</keyword>
<comment type="function">
    <text evidence="1">F(1)F(0) ATP synthase produces ATP from ADP in the presence of a proton or sodium gradient. F-type ATPases consist of two structural domains, F(1) containing the extramembraneous catalytic core and F(0) containing the membrane proton channel, linked together by a central stalk and a peripheral stalk. During catalysis, ATP synthesis in the catalytic domain of F(1) is coupled via a rotary mechanism of the central stalk subunits to proton translocation.</text>
</comment>
<comment type="function">
    <text evidence="1">Component of the F(0) channel, it forms part of the peripheral stalk, linking F(1) to F(0).</text>
</comment>
<comment type="subunit">
    <text evidence="1">F-type ATPases have 2 components, F(1) - the catalytic core - and F(0) - the membrane proton channel. F(1) has five subunits: alpha(3), beta(3), gamma(1), delta(1), epsilon(1). F(0) has three main subunits: a(1), b(2) and c(10-14). The alpha and beta chains form an alternating ring which encloses part of the gamma chain. F(1) is attached to F(0) by a central stalk formed by the gamma and epsilon chains, while a peripheral stalk is formed by the delta and b chains.</text>
</comment>
<comment type="subcellular location">
    <subcellularLocation>
        <location evidence="1">Cell inner membrane</location>
        <topology evidence="1">Single-pass membrane protein</topology>
    </subcellularLocation>
</comment>
<comment type="similarity">
    <text evidence="1">Belongs to the ATPase B chain family.</text>
</comment>
<feature type="chain" id="PRO_0000368435" description="ATP synthase subunit b">
    <location>
        <begin position="1"/>
        <end position="156"/>
    </location>
</feature>
<feature type="transmembrane region" description="Helical" evidence="1">
    <location>
        <begin position="11"/>
        <end position="31"/>
    </location>
</feature>
<dbReference type="EMBL" id="CP000083">
    <property type="protein sequence ID" value="AAZ26261.1"/>
    <property type="molecule type" value="Genomic_DNA"/>
</dbReference>
<dbReference type="RefSeq" id="WP_011040933.1">
    <property type="nucleotide sequence ID" value="NC_003910.7"/>
</dbReference>
<dbReference type="SMR" id="Q48AW4"/>
<dbReference type="STRING" id="167879.CPS_0058"/>
<dbReference type="KEGG" id="cps:CPS_0058"/>
<dbReference type="eggNOG" id="COG0711">
    <property type="taxonomic scope" value="Bacteria"/>
</dbReference>
<dbReference type="HOGENOM" id="CLU_079215_4_5_6"/>
<dbReference type="Proteomes" id="UP000000547">
    <property type="component" value="Chromosome"/>
</dbReference>
<dbReference type="GO" id="GO:0005886">
    <property type="term" value="C:plasma membrane"/>
    <property type="evidence" value="ECO:0007669"/>
    <property type="project" value="UniProtKB-SubCell"/>
</dbReference>
<dbReference type="GO" id="GO:0045259">
    <property type="term" value="C:proton-transporting ATP synthase complex"/>
    <property type="evidence" value="ECO:0007669"/>
    <property type="project" value="UniProtKB-KW"/>
</dbReference>
<dbReference type="GO" id="GO:0046933">
    <property type="term" value="F:proton-transporting ATP synthase activity, rotational mechanism"/>
    <property type="evidence" value="ECO:0007669"/>
    <property type="project" value="UniProtKB-UniRule"/>
</dbReference>
<dbReference type="GO" id="GO:0046961">
    <property type="term" value="F:proton-transporting ATPase activity, rotational mechanism"/>
    <property type="evidence" value="ECO:0007669"/>
    <property type="project" value="TreeGrafter"/>
</dbReference>
<dbReference type="CDD" id="cd06503">
    <property type="entry name" value="ATP-synt_Fo_b"/>
    <property type="match status" value="1"/>
</dbReference>
<dbReference type="FunFam" id="1.20.5.620:FF:000001">
    <property type="entry name" value="ATP synthase subunit b"/>
    <property type="match status" value="1"/>
</dbReference>
<dbReference type="Gene3D" id="1.20.5.620">
    <property type="entry name" value="F1F0 ATP synthase subunit B, membrane domain"/>
    <property type="match status" value="1"/>
</dbReference>
<dbReference type="HAMAP" id="MF_01398">
    <property type="entry name" value="ATP_synth_b_bprime"/>
    <property type="match status" value="1"/>
</dbReference>
<dbReference type="InterPro" id="IPR028987">
    <property type="entry name" value="ATP_synth_B-like_membr_sf"/>
</dbReference>
<dbReference type="InterPro" id="IPR002146">
    <property type="entry name" value="ATP_synth_b/b'su_bac/chlpt"/>
</dbReference>
<dbReference type="InterPro" id="IPR005864">
    <property type="entry name" value="ATP_synth_F0_bsu_bac"/>
</dbReference>
<dbReference type="InterPro" id="IPR050059">
    <property type="entry name" value="ATP_synthase_B_chain"/>
</dbReference>
<dbReference type="NCBIfam" id="TIGR01144">
    <property type="entry name" value="ATP_synt_b"/>
    <property type="match status" value="1"/>
</dbReference>
<dbReference type="NCBIfam" id="NF004411">
    <property type="entry name" value="PRK05759.1-2"/>
    <property type="match status" value="1"/>
</dbReference>
<dbReference type="NCBIfam" id="NF004413">
    <property type="entry name" value="PRK05759.1-4"/>
    <property type="match status" value="1"/>
</dbReference>
<dbReference type="PANTHER" id="PTHR33445:SF1">
    <property type="entry name" value="ATP SYNTHASE SUBUNIT B"/>
    <property type="match status" value="1"/>
</dbReference>
<dbReference type="PANTHER" id="PTHR33445">
    <property type="entry name" value="ATP SYNTHASE SUBUNIT B', CHLOROPLASTIC"/>
    <property type="match status" value="1"/>
</dbReference>
<dbReference type="Pfam" id="PF00430">
    <property type="entry name" value="ATP-synt_B"/>
    <property type="match status" value="1"/>
</dbReference>
<dbReference type="SUPFAM" id="SSF81573">
    <property type="entry name" value="F1F0 ATP synthase subunit B, membrane domain"/>
    <property type="match status" value="1"/>
</dbReference>
<evidence type="ECO:0000255" key="1">
    <source>
        <dbReference type="HAMAP-Rule" id="MF_01398"/>
    </source>
</evidence>